<geneLocation type="non-photosynthetic plastid"/>
<evidence type="ECO:0000255" key="1">
    <source>
        <dbReference type="HAMAP-Rule" id="MF_01342"/>
    </source>
</evidence>
<evidence type="ECO:0000305" key="2"/>
<name>RK16_EPIVI</name>
<protein>
    <recommendedName>
        <fullName evidence="1">Large ribosomal subunit protein uL16c</fullName>
    </recommendedName>
    <alternativeName>
        <fullName evidence="2">50S ribosomal protein L16, plastid</fullName>
    </alternativeName>
</protein>
<keyword id="KW-0934">Plastid</keyword>
<keyword id="KW-0687">Ribonucleoprotein</keyword>
<keyword id="KW-0689">Ribosomal protein</keyword>
<feature type="chain" id="PRO_0000062280" description="Large ribosomal subunit protein uL16c">
    <location>
        <begin position="1"/>
        <end position="135"/>
    </location>
</feature>
<reference key="1">
    <citation type="journal article" date="1992" name="Proc. Natl. Acad. Sci. U.S.A.">
        <title>Function and evolution of a minimal plastid genome from a nonphotosynthetic parasitic plant.</title>
        <authorList>
            <person name="Wolfe K.H."/>
            <person name="Morden C.W."/>
            <person name="Palmer J.D."/>
        </authorList>
    </citation>
    <scope>NUCLEOTIDE SEQUENCE [LARGE SCALE GENOMIC DNA]</scope>
</reference>
<reference key="2">
    <citation type="journal article" date="1992" name="J. Mol. Evol.">
        <title>Rapid evolution of the plastid translational apparatus in a nonphotosynthetic plant: loss or accelerated sequence evolution of tRNA and ribosomal protein genes.</title>
        <authorList>
            <person name="Wolfe K.H."/>
            <person name="Morden C.W."/>
            <person name="Ems S.C."/>
            <person name="Palmer J.D."/>
        </authorList>
    </citation>
    <scope>NUCLEOTIDE SEQUENCE [GENOMIC DNA]</scope>
</reference>
<comment type="subunit">
    <text evidence="1">Part of the 50S ribosomal subunit.</text>
</comment>
<comment type="subcellular location">
    <subcellularLocation>
        <location>Plastid</location>
    </subcellularLocation>
</comment>
<comment type="similarity">
    <text evidence="1">Belongs to the universal ribosomal protein uL16 family.</text>
</comment>
<dbReference type="EMBL" id="M81884">
    <property type="protein sequence ID" value="AAA65863.1"/>
    <property type="molecule type" value="Genomic_DNA"/>
</dbReference>
<dbReference type="PIR" id="S78394">
    <property type="entry name" value="S78394"/>
</dbReference>
<dbReference type="RefSeq" id="NP_054389.1">
    <property type="nucleotide sequence ID" value="NC_001568.1"/>
</dbReference>
<dbReference type="SMR" id="P30066"/>
<dbReference type="GeneID" id="801413"/>
<dbReference type="GO" id="GO:0005762">
    <property type="term" value="C:mitochondrial large ribosomal subunit"/>
    <property type="evidence" value="ECO:0007669"/>
    <property type="project" value="TreeGrafter"/>
</dbReference>
<dbReference type="GO" id="GO:0009536">
    <property type="term" value="C:plastid"/>
    <property type="evidence" value="ECO:0007669"/>
    <property type="project" value="UniProtKB-SubCell"/>
</dbReference>
<dbReference type="GO" id="GO:0019843">
    <property type="term" value="F:rRNA binding"/>
    <property type="evidence" value="ECO:0007669"/>
    <property type="project" value="InterPro"/>
</dbReference>
<dbReference type="GO" id="GO:0003735">
    <property type="term" value="F:structural constituent of ribosome"/>
    <property type="evidence" value="ECO:0007669"/>
    <property type="project" value="InterPro"/>
</dbReference>
<dbReference type="GO" id="GO:0032543">
    <property type="term" value="P:mitochondrial translation"/>
    <property type="evidence" value="ECO:0007669"/>
    <property type="project" value="TreeGrafter"/>
</dbReference>
<dbReference type="CDD" id="cd01433">
    <property type="entry name" value="Ribosomal_L16_L10e"/>
    <property type="match status" value="1"/>
</dbReference>
<dbReference type="FunFam" id="3.90.1170.10:FF:000001">
    <property type="entry name" value="50S ribosomal protein L16"/>
    <property type="match status" value="1"/>
</dbReference>
<dbReference type="Gene3D" id="3.90.1170.10">
    <property type="entry name" value="Ribosomal protein L10e/L16"/>
    <property type="match status" value="1"/>
</dbReference>
<dbReference type="HAMAP" id="MF_01342">
    <property type="entry name" value="Ribosomal_uL16"/>
    <property type="match status" value="1"/>
</dbReference>
<dbReference type="InterPro" id="IPR047873">
    <property type="entry name" value="Ribosomal_uL16"/>
</dbReference>
<dbReference type="InterPro" id="IPR000114">
    <property type="entry name" value="Ribosomal_uL16_bact-type"/>
</dbReference>
<dbReference type="InterPro" id="IPR020798">
    <property type="entry name" value="Ribosomal_uL16_CS"/>
</dbReference>
<dbReference type="InterPro" id="IPR016180">
    <property type="entry name" value="Ribosomal_uL16_dom"/>
</dbReference>
<dbReference type="InterPro" id="IPR036920">
    <property type="entry name" value="Ribosomal_uL16_sf"/>
</dbReference>
<dbReference type="NCBIfam" id="TIGR01164">
    <property type="entry name" value="rplP_bact"/>
    <property type="match status" value="1"/>
</dbReference>
<dbReference type="PANTHER" id="PTHR12220">
    <property type="entry name" value="50S/60S RIBOSOMAL PROTEIN L16"/>
    <property type="match status" value="1"/>
</dbReference>
<dbReference type="PANTHER" id="PTHR12220:SF13">
    <property type="entry name" value="LARGE RIBOSOMAL SUBUNIT PROTEIN UL16M"/>
    <property type="match status" value="1"/>
</dbReference>
<dbReference type="Pfam" id="PF00252">
    <property type="entry name" value="Ribosomal_L16"/>
    <property type="match status" value="1"/>
</dbReference>
<dbReference type="PRINTS" id="PR00060">
    <property type="entry name" value="RIBOSOMALL16"/>
</dbReference>
<dbReference type="SUPFAM" id="SSF54686">
    <property type="entry name" value="Ribosomal protein L16p/L10e"/>
    <property type="match status" value="1"/>
</dbReference>
<dbReference type="PROSITE" id="PS00586">
    <property type="entry name" value="RIBOSOMAL_L16_1"/>
    <property type="match status" value="1"/>
</dbReference>
<dbReference type="PROSITE" id="PS00701">
    <property type="entry name" value="RIBOSOMAL_L16_2"/>
    <property type="match status" value="1"/>
</dbReference>
<sequence length="135" mass="15235">MLSPQKTRFRKQHRGRMKGISYRGNNICFGKYGLKALEPAWITPRQIEAGRRAITRKFRRGGKIWVRVFPDKPVTVRSSETRMGSGKGSHKYFVAVVKPGLILYEIGGVTENIAKRAILIAASKMPMQTQFIISG</sequence>
<gene>
    <name evidence="1" type="primary">rpl16</name>
</gene>
<proteinExistence type="inferred from homology"/>
<accession>P30066</accession>
<organism>
    <name type="scientific">Epifagus virginiana</name>
    <name type="common">Beechdrops</name>
    <name type="synonym">Orobanche virginiana</name>
    <dbReference type="NCBI Taxonomy" id="4177"/>
    <lineage>
        <taxon>Eukaryota</taxon>
        <taxon>Viridiplantae</taxon>
        <taxon>Streptophyta</taxon>
        <taxon>Embryophyta</taxon>
        <taxon>Tracheophyta</taxon>
        <taxon>Spermatophyta</taxon>
        <taxon>Magnoliopsida</taxon>
        <taxon>eudicotyledons</taxon>
        <taxon>Gunneridae</taxon>
        <taxon>Pentapetalae</taxon>
        <taxon>asterids</taxon>
        <taxon>lamiids</taxon>
        <taxon>Lamiales</taxon>
        <taxon>Orobanchaceae</taxon>
        <taxon>Orobancheae</taxon>
        <taxon>Epifagus</taxon>
    </lineage>
</organism>